<accession>A1JMN8</accession>
<reference key="1">
    <citation type="journal article" date="2006" name="PLoS Genet.">
        <title>The complete genome sequence and comparative genome analysis of the high pathogenicity Yersinia enterocolitica strain 8081.</title>
        <authorList>
            <person name="Thomson N.R."/>
            <person name="Howard S."/>
            <person name="Wren B.W."/>
            <person name="Holden M.T.G."/>
            <person name="Crossman L."/>
            <person name="Challis G.L."/>
            <person name="Churcher C."/>
            <person name="Mungall K."/>
            <person name="Brooks K."/>
            <person name="Chillingworth T."/>
            <person name="Feltwell T."/>
            <person name="Abdellah Z."/>
            <person name="Hauser H."/>
            <person name="Jagels K."/>
            <person name="Maddison M."/>
            <person name="Moule S."/>
            <person name="Sanders M."/>
            <person name="Whitehead S."/>
            <person name="Quail M.A."/>
            <person name="Dougan G."/>
            <person name="Parkhill J."/>
            <person name="Prentice M.B."/>
        </authorList>
    </citation>
    <scope>NUCLEOTIDE SEQUENCE [LARGE SCALE GENOMIC DNA]</scope>
    <source>
        <strain>NCTC 13174 / 8081</strain>
    </source>
</reference>
<feature type="chain" id="PRO_1000051459" description="Asparagine--tRNA ligase">
    <location>
        <begin position="1"/>
        <end position="466"/>
    </location>
</feature>
<sequence length="466" mass="52146">MSVVPVVDVLQGRAAVDSEVTVRGWVRTRRDSKAGISFVAVYDGSCFDPLQAVVNNTLPNYQDEVLHLTTGCSVEVTGTVVASPGEGQSFEIQATAIKVVGWVDDPDTYPMAAKRHSIEYLREVAHLRPRTNLIGAVARVRHTLAQAIHRFFDENGYFWVSTPLITASDTEGAGEMFRVSTLDLENLPRTDTGAVDFSEDFFGKEAFLTVSGQLNGETYACALSKVYTFGPTFRAENSNTSRHLAEFWMVEPEVAFASLDDVAGLAEKMLKYVFQAVLNERADDMKFFAERVDKDAVDRLQRFVTSDFAQVDYTDAIEILLASGQKFENDVSWGIDLSSEHERYLAEQHFKAPVVVKNYPKDIKAFYMRMNEDGKTVAAMDVLAPGIGEIIGGSQREERLDVLDARLAEMGLNKEDYWWYRDLRRYGTVPHSGFGLGFERLISYVTGVQNVRDVIPFPRTPRNASF</sequence>
<proteinExistence type="inferred from homology"/>
<name>SYN_YERE8</name>
<gene>
    <name evidence="1" type="primary">asnS</name>
    <name type="ordered locus">YE1564</name>
</gene>
<organism>
    <name type="scientific">Yersinia enterocolitica serotype O:8 / biotype 1B (strain NCTC 13174 / 8081)</name>
    <dbReference type="NCBI Taxonomy" id="393305"/>
    <lineage>
        <taxon>Bacteria</taxon>
        <taxon>Pseudomonadati</taxon>
        <taxon>Pseudomonadota</taxon>
        <taxon>Gammaproteobacteria</taxon>
        <taxon>Enterobacterales</taxon>
        <taxon>Yersiniaceae</taxon>
        <taxon>Yersinia</taxon>
    </lineage>
</organism>
<dbReference type="EC" id="6.1.1.22" evidence="1"/>
<dbReference type="EMBL" id="AM286415">
    <property type="protein sequence ID" value="CAL11642.1"/>
    <property type="molecule type" value="Genomic_DNA"/>
</dbReference>
<dbReference type="RefSeq" id="WP_005159985.1">
    <property type="nucleotide sequence ID" value="NC_008800.1"/>
</dbReference>
<dbReference type="RefSeq" id="YP_001005858.1">
    <property type="nucleotide sequence ID" value="NC_008800.1"/>
</dbReference>
<dbReference type="SMR" id="A1JMN8"/>
<dbReference type="GeneID" id="31408603"/>
<dbReference type="KEGG" id="yen:YE1564"/>
<dbReference type="PATRIC" id="fig|393305.7.peg.1692"/>
<dbReference type="eggNOG" id="COG0017">
    <property type="taxonomic scope" value="Bacteria"/>
</dbReference>
<dbReference type="HOGENOM" id="CLU_004553_2_0_6"/>
<dbReference type="OrthoDB" id="9762036at2"/>
<dbReference type="Proteomes" id="UP000000642">
    <property type="component" value="Chromosome"/>
</dbReference>
<dbReference type="GO" id="GO:0005737">
    <property type="term" value="C:cytoplasm"/>
    <property type="evidence" value="ECO:0007669"/>
    <property type="project" value="UniProtKB-SubCell"/>
</dbReference>
<dbReference type="GO" id="GO:0004816">
    <property type="term" value="F:asparagine-tRNA ligase activity"/>
    <property type="evidence" value="ECO:0007669"/>
    <property type="project" value="UniProtKB-UniRule"/>
</dbReference>
<dbReference type="GO" id="GO:0005524">
    <property type="term" value="F:ATP binding"/>
    <property type="evidence" value="ECO:0007669"/>
    <property type="project" value="UniProtKB-UniRule"/>
</dbReference>
<dbReference type="GO" id="GO:0003676">
    <property type="term" value="F:nucleic acid binding"/>
    <property type="evidence" value="ECO:0007669"/>
    <property type="project" value="InterPro"/>
</dbReference>
<dbReference type="GO" id="GO:0006421">
    <property type="term" value="P:asparaginyl-tRNA aminoacylation"/>
    <property type="evidence" value="ECO:0007669"/>
    <property type="project" value="UniProtKB-UniRule"/>
</dbReference>
<dbReference type="CDD" id="cd00776">
    <property type="entry name" value="AsxRS_core"/>
    <property type="match status" value="1"/>
</dbReference>
<dbReference type="CDD" id="cd04318">
    <property type="entry name" value="EcAsnRS_like_N"/>
    <property type="match status" value="1"/>
</dbReference>
<dbReference type="FunFam" id="3.30.930.10:FF:000016">
    <property type="entry name" value="Asparagine--tRNA ligase"/>
    <property type="match status" value="1"/>
</dbReference>
<dbReference type="Gene3D" id="3.30.930.10">
    <property type="entry name" value="Bira Bifunctional Protein, Domain 2"/>
    <property type="match status" value="1"/>
</dbReference>
<dbReference type="Gene3D" id="2.40.50.140">
    <property type="entry name" value="Nucleic acid-binding proteins"/>
    <property type="match status" value="1"/>
</dbReference>
<dbReference type="HAMAP" id="MF_00534">
    <property type="entry name" value="Asn_tRNA_synth"/>
    <property type="match status" value="1"/>
</dbReference>
<dbReference type="InterPro" id="IPR004364">
    <property type="entry name" value="Aa-tRNA-synt_II"/>
</dbReference>
<dbReference type="InterPro" id="IPR006195">
    <property type="entry name" value="aa-tRNA-synth_II"/>
</dbReference>
<dbReference type="InterPro" id="IPR045864">
    <property type="entry name" value="aa-tRNA-synth_II/BPL/LPL"/>
</dbReference>
<dbReference type="InterPro" id="IPR004522">
    <property type="entry name" value="Asn-tRNA-ligase"/>
</dbReference>
<dbReference type="InterPro" id="IPR002312">
    <property type="entry name" value="Asp/Asn-tRNA-synth_IIb"/>
</dbReference>
<dbReference type="InterPro" id="IPR012340">
    <property type="entry name" value="NA-bd_OB-fold"/>
</dbReference>
<dbReference type="InterPro" id="IPR004365">
    <property type="entry name" value="NA-bd_OB_tRNA"/>
</dbReference>
<dbReference type="NCBIfam" id="TIGR00457">
    <property type="entry name" value="asnS"/>
    <property type="match status" value="1"/>
</dbReference>
<dbReference type="NCBIfam" id="NF003037">
    <property type="entry name" value="PRK03932.1"/>
    <property type="match status" value="1"/>
</dbReference>
<dbReference type="PANTHER" id="PTHR22594:SF34">
    <property type="entry name" value="ASPARAGINE--TRNA LIGASE, MITOCHONDRIAL-RELATED"/>
    <property type="match status" value="1"/>
</dbReference>
<dbReference type="PANTHER" id="PTHR22594">
    <property type="entry name" value="ASPARTYL/LYSYL-TRNA SYNTHETASE"/>
    <property type="match status" value="1"/>
</dbReference>
<dbReference type="Pfam" id="PF00152">
    <property type="entry name" value="tRNA-synt_2"/>
    <property type="match status" value="1"/>
</dbReference>
<dbReference type="Pfam" id="PF01336">
    <property type="entry name" value="tRNA_anti-codon"/>
    <property type="match status" value="1"/>
</dbReference>
<dbReference type="PRINTS" id="PR01042">
    <property type="entry name" value="TRNASYNTHASP"/>
</dbReference>
<dbReference type="SUPFAM" id="SSF55681">
    <property type="entry name" value="Class II aaRS and biotin synthetases"/>
    <property type="match status" value="1"/>
</dbReference>
<dbReference type="SUPFAM" id="SSF50249">
    <property type="entry name" value="Nucleic acid-binding proteins"/>
    <property type="match status" value="1"/>
</dbReference>
<dbReference type="PROSITE" id="PS50862">
    <property type="entry name" value="AA_TRNA_LIGASE_II"/>
    <property type="match status" value="1"/>
</dbReference>
<comment type="catalytic activity">
    <reaction evidence="1">
        <text>tRNA(Asn) + L-asparagine + ATP = L-asparaginyl-tRNA(Asn) + AMP + diphosphate + H(+)</text>
        <dbReference type="Rhea" id="RHEA:11180"/>
        <dbReference type="Rhea" id="RHEA-COMP:9659"/>
        <dbReference type="Rhea" id="RHEA-COMP:9674"/>
        <dbReference type="ChEBI" id="CHEBI:15378"/>
        <dbReference type="ChEBI" id="CHEBI:30616"/>
        <dbReference type="ChEBI" id="CHEBI:33019"/>
        <dbReference type="ChEBI" id="CHEBI:58048"/>
        <dbReference type="ChEBI" id="CHEBI:78442"/>
        <dbReference type="ChEBI" id="CHEBI:78515"/>
        <dbReference type="ChEBI" id="CHEBI:456215"/>
        <dbReference type="EC" id="6.1.1.22"/>
    </reaction>
</comment>
<comment type="subunit">
    <text evidence="1">Homodimer.</text>
</comment>
<comment type="subcellular location">
    <subcellularLocation>
        <location>Cytoplasm</location>
    </subcellularLocation>
</comment>
<comment type="similarity">
    <text evidence="1">Belongs to the class-II aminoacyl-tRNA synthetase family.</text>
</comment>
<evidence type="ECO:0000255" key="1">
    <source>
        <dbReference type="HAMAP-Rule" id="MF_00534"/>
    </source>
</evidence>
<keyword id="KW-0030">Aminoacyl-tRNA synthetase</keyword>
<keyword id="KW-0067">ATP-binding</keyword>
<keyword id="KW-0963">Cytoplasm</keyword>
<keyword id="KW-0436">Ligase</keyword>
<keyword id="KW-0547">Nucleotide-binding</keyword>
<keyword id="KW-0648">Protein biosynthesis</keyword>
<protein>
    <recommendedName>
        <fullName evidence="1">Asparagine--tRNA ligase</fullName>
        <ecNumber evidence="1">6.1.1.22</ecNumber>
    </recommendedName>
    <alternativeName>
        <fullName evidence="1">Asparaginyl-tRNA synthetase</fullName>
        <shortName evidence="1">AsnRS</shortName>
    </alternativeName>
</protein>